<name>UBR1_DROME</name>
<dbReference type="EC" id="2.3.2.27"/>
<dbReference type="EMBL" id="AE014298">
    <property type="protein sequence ID" value="AAF48687.2"/>
    <property type="molecule type" value="Genomic_DNA"/>
</dbReference>
<dbReference type="EMBL" id="AY094815">
    <property type="protein sequence ID" value="AAM11168.1"/>
    <property type="molecule type" value="mRNA"/>
</dbReference>
<dbReference type="EMBL" id="BT044223">
    <property type="protein sequence ID" value="ACH92288.1"/>
    <property type="molecule type" value="mRNA"/>
</dbReference>
<dbReference type="RefSeq" id="NP_001245723.1">
    <property type="nucleotide sequence ID" value="NM_001258794.2"/>
</dbReference>
<dbReference type="RefSeq" id="NP_001285356.1">
    <property type="nucleotide sequence ID" value="NM_001298427.1"/>
</dbReference>
<dbReference type="RefSeq" id="NP_573184.1">
    <property type="nucleotide sequence ID" value="NM_132956.3"/>
</dbReference>
<dbReference type="SMR" id="Q9VX91"/>
<dbReference type="BioGRID" id="59018">
    <property type="interactions" value="4"/>
</dbReference>
<dbReference type="FunCoup" id="Q9VX91">
    <property type="interactions" value="1358"/>
</dbReference>
<dbReference type="IntAct" id="Q9VX91">
    <property type="interactions" value="6"/>
</dbReference>
<dbReference type="STRING" id="7227.FBpp0312009"/>
<dbReference type="PaxDb" id="7227-FBpp0074189"/>
<dbReference type="DNASU" id="32687"/>
<dbReference type="EnsemblMetazoa" id="FBtr0074415">
    <property type="protein sequence ID" value="FBpp0074189"/>
    <property type="gene ID" value="FBgn0030809"/>
</dbReference>
<dbReference type="EnsemblMetazoa" id="FBtr0308839">
    <property type="protein sequence ID" value="FBpp0300996"/>
    <property type="gene ID" value="FBgn0030809"/>
</dbReference>
<dbReference type="EnsemblMetazoa" id="FBtr0346190">
    <property type="protein sequence ID" value="FBpp0312009"/>
    <property type="gene ID" value="FBgn0030809"/>
</dbReference>
<dbReference type="GeneID" id="32687"/>
<dbReference type="KEGG" id="dme:Dmel_CG9086"/>
<dbReference type="UCSC" id="CG9086-RA">
    <property type="organism name" value="d. melanogaster"/>
</dbReference>
<dbReference type="AGR" id="FB:FBgn0030809"/>
<dbReference type="CTD" id="197131"/>
<dbReference type="FlyBase" id="FBgn0030809">
    <property type="gene designation" value="Ubr1"/>
</dbReference>
<dbReference type="VEuPathDB" id="VectorBase:FBgn0030809"/>
<dbReference type="eggNOG" id="KOG1140">
    <property type="taxonomic scope" value="Eukaryota"/>
</dbReference>
<dbReference type="GeneTree" id="ENSGT00950000183075"/>
<dbReference type="HOGENOM" id="CLU_001801_2_0_1"/>
<dbReference type="InParanoid" id="Q9VX91"/>
<dbReference type="OMA" id="GEASYMC"/>
<dbReference type="OrthoDB" id="26387at2759"/>
<dbReference type="PhylomeDB" id="Q9VX91"/>
<dbReference type="Reactome" id="R-DME-983168">
    <property type="pathway name" value="Antigen processing: Ubiquitination &amp; Proteasome degradation"/>
</dbReference>
<dbReference type="SignaLink" id="Q9VX91"/>
<dbReference type="UniPathway" id="UPA00143"/>
<dbReference type="BioGRID-ORCS" id="32687">
    <property type="hits" value="1 hit in 3 CRISPR screens"/>
</dbReference>
<dbReference type="GenomeRNAi" id="32687"/>
<dbReference type="PRO" id="PR:Q9VX91"/>
<dbReference type="Proteomes" id="UP000000803">
    <property type="component" value="Chromosome X"/>
</dbReference>
<dbReference type="Bgee" id="FBgn0030809">
    <property type="expression patterns" value="Expressed in adult oenocyte (Drosophila) in body wall and 270 other cell types or tissues"/>
</dbReference>
<dbReference type="ExpressionAtlas" id="Q9VX91">
    <property type="expression patterns" value="baseline and differential"/>
</dbReference>
<dbReference type="GO" id="GO:0005737">
    <property type="term" value="C:cytoplasm"/>
    <property type="evidence" value="ECO:0000250"/>
    <property type="project" value="FlyBase"/>
</dbReference>
<dbReference type="GO" id="GO:0000151">
    <property type="term" value="C:ubiquitin ligase complex"/>
    <property type="evidence" value="ECO:0000318"/>
    <property type="project" value="GO_Central"/>
</dbReference>
<dbReference type="GO" id="GO:0061630">
    <property type="term" value="F:ubiquitin protein ligase activity"/>
    <property type="evidence" value="ECO:0000318"/>
    <property type="project" value="GO_Central"/>
</dbReference>
<dbReference type="GO" id="GO:0004842">
    <property type="term" value="F:ubiquitin-protein transferase activity"/>
    <property type="evidence" value="ECO:0000250"/>
    <property type="project" value="FlyBase"/>
</dbReference>
<dbReference type="GO" id="GO:0008270">
    <property type="term" value="F:zinc ion binding"/>
    <property type="evidence" value="ECO:0000255"/>
    <property type="project" value="FlyBase"/>
</dbReference>
<dbReference type="GO" id="GO:0016567">
    <property type="term" value="P:protein ubiquitination"/>
    <property type="evidence" value="ECO:0000250"/>
    <property type="project" value="FlyBase"/>
</dbReference>
<dbReference type="GO" id="GO:0071596">
    <property type="term" value="P:ubiquitin-dependent protein catabolic process via the N-end rule pathway"/>
    <property type="evidence" value="ECO:0000318"/>
    <property type="project" value="GO_Central"/>
</dbReference>
<dbReference type="CDD" id="cd16482">
    <property type="entry name" value="RING-H2_UBR1-like"/>
    <property type="match status" value="1"/>
</dbReference>
<dbReference type="CDD" id="cd19672">
    <property type="entry name" value="UBR-box_UBR1_like"/>
    <property type="match status" value="1"/>
</dbReference>
<dbReference type="FunFam" id="1.10.10.2670:FF:000007">
    <property type="entry name" value="E3 ubiquitin-protein ligase UBR1"/>
    <property type="match status" value="1"/>
</dbReference>
<dbReference type="FunFam" id="2.10.110.30:FF:000001">
    <property type="entry name" value="E3 ubiquitin-protein ligase UBR2 isoform 1"/>
    <property type="match status" value="1"/>
</dbReference>
<dbReference type="Gene3D" id="2.10.110.30">
    <property type="match status" value="1"/>
</dbReference>
<dbReference type="Gene3D" id="3.30.1390.10">
    <property type="match status" value="1"/>
</dbReference>
<dbReference type="Gene3D" id="1.10.10.2670">
    <property type="entry name" value="E3 ubiquitin-protein ligase"/>
    <property type="match status" value="1"/>
</dbReference>
<dbReference type="InterPro" id="IPR003769">
    <property type="entry name" value="ClpS_core"/>
</dbReference>
<dbReference type="InterPro" id="IPR042065">
    <property type="entry name" value="E3_ELL-like"/>
</dbReference>
<dbReference type="InterPro" id="IPR044046">
    <property type="entry name" value="E3_ligase_UBR-like_C"/>
</dbReference>
<dbReference type="InterPro" id="IPR014719">
    <property type="entry name" value="Ribosomal_bL12_C/ClpS-like"/>
</dbReference>
<dbReference type="InterPro" id="IPR039164">
    <property type="entry name" value="UBR1-like"/>
</dbReference>
<dbReference type="InterPro" id="IPR055194">
    <property type="entry name" value="UBR1-like_winged-helix"/>
</dbReference>
<dbReference type="InterPro" id="IPR036390">
    <property type="entry name" value="WH_DNA-bd_sf"/>
</dbReference>
<dbReference type="InterPro" id="IPR003126">
    <property type="entry name" value="Znf_UBR"/>
</dbReference>
<dbReference type="PANTHER" id="PTHR21497:SF24">
    <property type="entry name" value="E3 UBIQUITIN-PROTEIN LIGASE UBR1"/>
    <property type="match status" value="1"/>
</dbReference>
<dbReference type="PANTHER" id="PTHR21497">
    <property type="entry name" value="UBIQUITIN LIGASE E3 ALPHA-RELATED"/>
    <property type="match status" value="1"/>
</dbReference>
<dbReference type="Pfam" id="PF02617">
    <property type="entry name" value="ClpS"/>
    <property type="match status" value="1"/>
</dbReference>
<dbReference type="Pfam" id="PF18995">
    <property type="entry name" value="PRT6_C"/>
    <property type="match status" value="1"/>
</dbReference>
<dbReference type="Pfam" id="PF22960">
    <property type="entry name" value="UBR1-like_wing"/>
    <property type="match status" value="1"/>
</dbReference>
<dbReference type="Pfam" id="PF02207">
    <property type="entry name" value="zf-UBR"/>
    <property type="match status" value="1"/>
</dbReference>
<dbReference type="SMART" id="SM00396">
    <property type="entry name" value="ZnF_UBR1"/>
    <property type="match status" value="1"/>
</dbReference>
<dbReference type="SUPFAM" id="SSF54736">
    <property type="entry name" value="ClpS-like"/>
    <property type="match status" value="1"/>
</dbReference>
<dbReference type="SUPFAM" id="SSF46785">
    <property type="entry name" value="Winged helix' DNA-binding domain"/>
    <property type="match status" value="1"/>
</dbReference>
<dbReference type="PROSITE" id="PS51157">
    <property type="entry name" value="ZF_UBR"/>
    <property type="match status" value="1"/>
</dbReference>
<keyword id="KW-0479">Metal-binding</keyword>
<keyword id="KW-1185">Reference proteome</keyword>
<keyword id="KW-0808">Transferase</keyword>
<keyword id="KW-0833">Ubl conjugation pathway</keyword>
<keyword id="KW-0862">Zinc</keyword>
<keyword id="KW-0863">Zinc-finger</keyword>
<reference key="1">
    <citation type="journal article" date="2000" name="Science">
        <title>The genome sequence of Drosophila melanogaster.</title>
        <authorList>
            <person name="Adams M.D."/>
            <person name="Celniker S.E."/>
            <person name="Holt R.A."/>
            <person name="Evans C.A."/>
            <person name="Gocayne J.D."/>
            <person name="Amanatides P.G."/>
            <person name="Scherer S.E."/>
            <person name="Li P.W."/>
            <person name="Hoskins R.A."/>
            <person name="Galle R.F."/>
            <person name="George R.A."/>
            <person name="Lewis S.E."/>
            <person name="Richards S."/>
            <person name="Ashburner M."/>
            <person name="Henderson S.N."/>
            <person name="Sutton G.G."/>
            <person name="Wortman J.R."/>
            <person name="Yandell M.D."/>
            <person name="Zhang Q."/>
            <person name="Chen L.X."/>
            <person name="Brandon R.C."/>
            <person name="Rogers Y.-H.C."/>
            <person name="Blazej R.G."/>
            <person name="Champe M."/>
            <person name="Pfeiffer B.D."/>
            <person name="Wan K.H."/>
            <person name="Doyle C."/>
            <person name="Baxter E.G."/>
            <person name="Helt G."/>
            <person name="Nelson C.R."/>
            <person name="Miklos G.L.G."/>
            <person name="Abril J.F."/>
            <person name="Agbayani A."/>
            <person name="An H.-J."/>
            <person name="Andrews-Pfannkoch C."/>
            <person name="Baldwin D."/>
            <person name="Ballew R.M."/>
            <person name="Basu A."/>
            <person name="Baxendale J."/>
            <person name="Bayraktaroglu L."/>
            <person name="Beasley E.M."/>
            <person name="Beeson K.Y."/>
            <person name="Benos P.V."/>
            <person name="Berman B.P."/>
            <person name="Bhandari D."/>
            <person name="Bolshakov S."/>
            <person name="Borkova D."/>
            <person name="Botchan M.R."/>
            <person name="Bouck J."/>
            <person name="Brokstein P."/>
            <person name="Brottier P."/>
            <person name="Burtis K.C."/>
            <person name="Busam D.A."/>
            <person name="Butler H."/>
            <person name="Cadieu E."/>
            <person name="Center A."/>
            <person name="Chandra I."/>
            <person name="Cherry J.M."/>
            <person name="Cawley S."/>
            <person name="Dahlke C."/>
            <person name="Davenport L.B."/>
            <person name="Davies P."/>
            <person name="de Pablos B."/>
            <person name="Delcher A."/>
            <person name="Deng Z."/>
            <person name="Mays A.D."/>
            <person name="Dew I."/>
            <person name="Dietz S.M."/>
            <person name="Dodson K."/>
            <person name="Doup L.E."/>
            <person name="Downes M."/>
            <person name="Dugan-Rocha S."/>
            <person name="Dunkov B.C."/>
            <person name="Dunn P."/>
            <person name="Durbin K.J."/>
            <person name="Evangelista C.C."/>
            <person name="Ferraz C."/>
            <person name="Ferriera S."/>
            <person name="Fleischmann W."/>
            <person name="Fosler C."/>
            <person name="Gabrielian A.E."/>
            <person name="Garg N.S."/>
            <person name="Gelbart W.M."/>
            <person name="Glasser K."/>
            <person name="Glodek A."/>
            <person name="Gong F."/>
            <person name="Gorrell J.H."/>
            <person name="Gu Z."/>
            <person name="Guan P."/>
            <person name="Harris M."/>
            <person name="Harris N.L."/>
            <person name="Harvey D.A."/>
            <person name="Heiman T.J."/>
            <person name="Hernandez J.R."/>
            <person name="Houck J."/>
            <person name="Hostin D."/>
            <person name="Houston K.A."/>
            <person name="Howland T.J."/>
            <person name="Wei M.-H."/>
            <person name="Ibegwam C."/>
            <person name="Jalali M."/>
            <person name="Kalush F."/>
            <person name="Karpen G.H."/>
            <person name="Ke Z."/>
            <person name="Kennison J.A."/>
            <person name="Ketchum K.A."/>
            <person name="Kimmel B.E."/>
            <person name="Kodira C.D."/>
            <person name="Kraft C.L."/>
            <person name="Kravitz S."/>
            <person name="Kulp D."/>
            <person name="Lai Z."/>
            <person name="Lasko P."/>
            <person name="Lei Y."/>
            <person name="Levitsky A.A."/>
            <person name="Li J.H."/>
            <person name="Li Z."/>
            <person name="Liang Y."/>
            <person name="Lin X."/>
            <person name="Liu X."/>
            <person name="Mattei B."/>
            <person name="McIntosh T.C."/>
            <person name="McLeod M.P."/>
            <person name="McPherson D."/>
            <person name="Merkulov G."/>
            <person name="Milshina N.V."/>
            <person name="Mobarry C."/>
            <person name="Morris J."/>
            <person name="Moshrefi A."/>
            <person name="Mount S.M."/>
            <person name="Moy M."/>
            <person name="Murphy B."/>
            <person name="Murphy L."/>
            <person name="Muzny D.M."/>
            <person name="Nelson D.L."/>
            <person name="Nelson D.R."/>
            <person name="Nelson K.A."/>
            <person name="Nixon K."/>
            <person name="Nusskern D.R."/>
            <person name="Pacleb J.M."/>
            <person name="Palazzolo M."/>
            <person name="Pittman G.S."/>
            <person name="Pan S."/>
            <person name="Pollard J."/>
            <person name="Puri V."/>
            <person name="Reese M.G."/>
            <person name="Reinert K."/>
            <person name="Remington K."/>
            <person name="Saunders R.D.C."/>
            <person name="Scheeler F."/>
            <person name="Shen H."/>
            <person name="Shue B.C."/>
            <person name="Siden-Kiamos I."/>
            <person name="Simpson M."/>
            <person name="Skupski M.P."/>
            <person name="Smith T.J."/>
            <person name="Spier E."/>
            <person name="Spradling A.C."/>
            <person name="Stapleton M."/>
            <person name="Strong R."/>
            <person name="Sun E."/>
            <person name="Svirskas R."/>
            <person name="Tector C."/>
            <person name="Turner R."/>
            <person name="Venter E."/>
            <person name="Wang A.H."/>
            <person name="Wang X."/>
            <person name="Wang Z.-Y."/>
            <person name="Wassarman D.A."/>
            <person name="Weinstock G.M."/>
            <person name="Weissenbach J."/>
            <person name="Williams S.M."/>
            <person name="Woodage T."/>
            <person name="Worley K.C."/>
            <person name="Wu D."/>
            <person name="Yang S."/>
            <person name="Yao Q.A."/>
            <person name="Ye J."/>
            <person name="Yeh R.-F."/>
            <person name="Zaveri J.S."/>
            <person name="Zhan M."/>
            <person name="Zhang G."/>
            <person name="Zhao Q."/>
            <person name="Zheng L."/>
            <person name="Zheng X.H."/>
            <person name="Zhong F.N."/>
            <person name="Zhong W."/>
            <person name="Zhou X."/>
            <person name="Zhu S.C."/>
            <person name="Zhu X."/>
            <person name="Smith H.O."/>
            <person name="Gibbs R.A."/>
            <person name="Myers E.W."/>
            <person name="Rubin G.M."/>
            <person name="Venter J.C."/>
        </authorList>
    </citation>
    <scope>NUCLEOTIDE SEQUENCE [LARGE SCALE GENOMIC DNA]</scope>
    <source>
        <strain>Berkeley</strain>
    </source>
</reference>
<reference key="2">
    <citation type="journal article" date="2002" name="Genome Biol.">
        <title>Annotation of the Drosophila melanogaster euchromatic genome: a systematic review.</title>
        <authorList>
            <person name="Misra S."/>
            <person name="Crosby M.A."/>
            <person name="Mungall C.J."/>
            <person name="Matthews B.B."/>
            <person name="Campbell K.S."/>
            <person name="Hradecky P."/>
            <person name="Huang Y."/>
            <person name="Kaminker J.S."/>
            <person name="Millburn G.H."/>
            <person name="Prochnik S.E."/>
            <person name="Smith C.D."/>
            <person name="Tupy J.L."/>
            <person name="Whitfield E.J."/>
            <person name="Bayraktaroglu L."/>
            <person name="Berman B.P."/>
            <person name="Bettencourt B.R."/>
            <person name="Celniker S.E."/>
            <person name="de Grey A.D.N.J."/>
            <person name="Drysdale R.A."/>
            <person name="Harris N.L."/>
            <person name="Richter J."/>
            <person name="Russo S."/>
            <person name="Schroeder A.J."/>
            <person name="Shu S.Q."/>
            <person name="Stapleton M."/>
            <person name="Yamada C."/>
            <person name="Ashburner M."/>
            <person name="Gelbart W.M."/>
            <person name="Rubin G.M."/>
            <person name="Lewis S.E."/>
        </authorList>
    </citation>
    <scope>GENOME REANNOTATION</scope>
    <source>
        <strain>Berkeley</strain>
    </source>
</reference>
<reference key="3">
    <citation type="journal article" date="2002" name="Genome Biol.">
        <title>A Drosophila full-length cDNA resource.</title>
        <authorList>
            <person name="Stapleton M."/>
            <person name="Carlson J.W."/>
            <person name="Brokstein P."/>
            <person name="Yu C."/>
            <person name="Champe M."/>
            <person name="George R.A."/>
            <person name="Guarin H."/>
            <person name="Kronmiller B."/>
            <person name="Pacleb J.M."/>
            <person name="Park S."/>
            <person name="Wan K.H."/>
            <person name="Rubin G.M."/>
            <person name="Celniker S.E."/>
        </authorList>
    </citation>
    <scope>NUCLEOTIDE SEQUENCE [LARGE SCALE MRNA]</scope>
    <source>
        <strain>Berkeley</strain>
        <tissue>Embryo</tissue>
    </source>
</reference>
<reference key="4">
    <citation type="submission" date="2008-09" db="EMBL/GenBank/DDBJ databases">
        <authorList>
            <person name="Carlson J.W."/>
            <person name="Booth B."/>
            <person name="Frise E."/>
            <person name="Park S."/>
            <person name="Wan K.H."/>
            <person name="Yu C."/>
            <person name="Celniker S.E."/>
        </authorList>
    </citation>
    <scope>NUCLEOTIDE SEQUENCE [LARGE SCALE MRNA]</scope>
    <source>
        <strain>Berkeley</strain>
    </source>
</reference>
<sequence length="1824" mass="208361">MDRYDMEDVVVAPPAECSSPLKEWRLKRQAGTLDRSDIIEFLKRESPKYFDYQTSATVKDTNVITLKCMFKESLAKEEIIDVVVEFMLGDNPSSALEKLRLEGNTATVCGKVFKNGEPTYSCRECGVDPTCVLCVNCFKRSAHRFHKYKMSTSGGGGCCDCGDDEAWKKDQYCELHLANRKNPLESKILTDAVLERVEICFGAILAFCVSYLEIEPNASLQCLDGNVEGGQVDGAQYCTVLYNDESHTFDQVIQTLTKIAKCRAKDAMEIVAAIDREGRAVVKCDTFEECNKLKVSIENQMILPTSLVSTARNNQSLRTSVLHIGAVACQQFALQLLGWFQEFLVRHYLFRKTFSELVQRKQETFCIRHILEYDVKLWKTARTCWHRLLISGMLMEYDNKMILAQEFSRRYATIVEDFISDDHDHAFSIVSLSVQLFTVPSIAHHLIAHEGIFDKLLHTFYHVAIEKFIRNKTLHFSKNIASLTFFKRANYILYDLRYLLSLKPDVLSNDLRNGFLEGCRALMRVLNVMQGMESMTRQTGQHMDYEPEWECAFNLHIKLATTISQVIDWASGDVKLLRKLYKMTMRALVSNSFIVGGEKVMQPKKVADHVANCLVYDISVQPVSIHLPLSRFFAGIYLHLGAHDLTYDGLQTETEALSIKLTPREIIEPVLCTQAMIAQVGAGLWRRNGYTLLHQLYFYRNVRCRVEMLDRDIACLQIGASLMESNEFLIHVLNRFNTIPWLQENYWSLLSGNEMNDDIIREASIFDEFLELLIVIIGERWMPGVSMVTEEDRLRKEIIQLLCIKPYSHSELSRALPDGNSGNSDNVFEEVINTVAVFKKPVGADSKGVYELKEHLLKEFNMYFYHYTKEDKSKAEELQRERRKAKKQLVCCPPPMLPKLTPAFTPMANILQCPVFLNICSLIMERALNAYSRSFTESHLQKVLHLLGYAIQEELSEHYPFLSFYERSQEYGILEKLEELARCPRLEAHYDFVLWTIERFKQLQAKQAPSDGRAGPSCSQQGTGGKLSLSAEEQAREERENRARLAAERRAHIMAQMQKAQKSFISSNAEMFADTENETRKESASTGPMDWEDIPPEEEQGAVALESKVACLGPDRKFYHGTDDTFKCILCFENCAISRGGRQLVSSAFVQTSRVIFTTPNLRNSQSALHISCCGHVMHYSCWLEYFTNEEFKELRRPHRNRAALAQAANVEFQCPYCRTLSNAIIPVTETLPAFSAPPSPNESYLPLDSFVEIMSTLAIELGNVKDHELTTLPSVSNILRLSGVVGGLAQFERSVQLIKNPPRLHADYIEGIEFLKKALLNTMKIQQSHLKDHPAIESIEMVPILWDSCSYTLQALEIYLYAVEKPLKAELSMRHQSCARNLVRACSRSSALEWETDLPLLPPMRSQAEFSSRLLDTIFNQNDTSVLEWDCFRVLVPFQFGVLNLMVPEKGYKTIIPSGSMFDFYIMQTMFLAQLTKAVLCFDVEKEKAKRAEKAPNSELTQLDYIEQLPSRIRDNMIDFYRRYNIPARVLQKTKQKQLVEEESEENQGHGQTVVIPCESHHLALLLEYVQRQMSSFLRCSCLFYRFLTDVDFPDTFPTDQPDRFDLMCQYLGLDPMLGVYFDMETVYATMMHSFASHPHIDREVEQRCQPDARRSLQVEPCLRPLPRLKVLCDDFSDLINSVSDIFCPNNEREEMKTPTMCLICGLILCGQSYCCQPELGKVSVGACTHHAHACGAEVGIFLRIRDCQVVYLGRGKGCFVPPPYLDEYGETDMGLRRGNPLRLSQAAYRKIYLQWLGHGLHGEIARLNDNANVAAAAQWHHM</sequence>
<organism>
    <name type="scientific">Drosophila melanogaster</name>
    <name type="common">Fruit fly</name>
    <dbReference type="NCBI Taxonomy" id="7227"/>
    <lineage>
        <taxon>Eukaryota</taxon>
        <taxon>Metazoa</taxon>
        <taxon>Ecdysozoa</taxon>
        <taxon>Arthropoda</taxon>
        <taxon>Hexapoda</taxon>
        <taxon>Insecta</taxon>
        <taxon>Pterygota</taxon>
        <taxon>Neoptera</taxon>
        <taxon>Endopterygota</taxon>
        <taxon>Diptera</taxon>
        <taxon>Brachycera</taxon>
        <taxon>Muscomorpha</taxon>
        <taxon>Ephydroidea</taxon>
        <taxon>Drosophilidae</taxon>
        <taxon>Drosophila</taxon>
        <taxon>Sophophora</taxon>
    </lineage>
</organism>
<feature type="chain" id="PRO_0000056139" description="E3 ubiquitin-protein ligase UBR1">
    <location>
        <begin position="1"/>
        <end position="1824"/>
    </location>
</feature>
<feature type="zinc finger region" description="UBR-type" evidence="2">
    <location>
        <begin position="107"/>
        <end position="178"/>
    </location>
</feature>
<feature type="zinc finger region" description="RING-type; atypical">
    <location>
        <begin position="1126"/>
        <end position="1220"/>
    </location>
</feature>
<feature type="region of interest" description="Disordered" evidence="3">
    <location>
        <begin position="1006"/>
        <end position="1043"/>
    </location>
</feature>
<feature type="region of interest" description="Disordered" evidence="3">
    <location>
        <begin position="1073"/>
        <end position="1093"/>
    </location>
</feature>
<feature type="compositionally biased region" description="Basic and acidic residues" evidence="3">
    <location>
        <begin position="1033"/>
        <end position="1043"/>
    </location>
</feature>
<feature type="sequence conflict" description="In Ref. 3; AAM11168." evidence="4" ref="3">
    <original>E</original>
    <variation>V</variation>
    <location>
        <position position="1661"/>
    </location>
</feature>
<proteinExistence type="evidence at transcript level"/>
<evidence type="ECO:0000250" key="1"/>
<evidence type="ECO:0000255" key="2">
    <source>
        <dbReference type="PROSITE-ProRule" id="PRU00508"/>
    </source>
</evidence>
<evidence type="ECO:0000256" key="3">
    <source>
        <dbReference type="SAM" id="MobiDB-lite"/>
    </source>
</evidence>
<evidence type="ECO:0000305" key="4"/>
<evidence type="ECO:0000312" key="5">
    <source>
        <dbReference type="FlyBase" id="FBgn0030809"/>
    </source>
</evidence>
<gene>
    <name evidence="5" type="primary">Ubr1</name>
    <name evidence="5" type="ORF">CG9086</name>
</gene>
<comment type="function">
    <text evidence="1">E3 ubiquitin-protein ligase which is a component of the N-end rule pathway. Recognizes and binds to proteins bearing specific N-terminal residues that are destabilizing according to the N-end rule, leading to their ubiquitination and subsequent degradation.</text>
</comment>
<comment type="catalytic activity">
    <reaction>
        <text>S-ubiquitinyl-[E2 ubiquitin-conjugating enzyme]-L-cysteine + [acceptor protein]-L-lysine = [E2 ubiquitin-conjugating enzyme]-L-cysteine + N(6)-ubiquitinyl-[acceptor protein]-L-lysine.</text>
        <dbReference type="EC" id="2.3.2.27"/>
    </reaction>
</comment>
<comment type="pathway">
    <text>Protein modification; protein ubiquitination.</text>
</comment>
<comment type="domain">
    <text>The RING-H2 zinc finger is an atypical RING finger with a His ligand in place of the fourth Cys of the classical motif.</text>
</comment>
<comment type="similarity">
    <text evidence="4">Belongs to the E3 ubiquitin-protein ligase UBR1-like family.</text>
</comment>
<protein>
    <recommendedName>
        <fullName>E3 ubiquitin-protein ligase UBR1</fullName>
        <ecNumber>2.3.2.27</ecNumber>
    </recommendedName>
    <alternativeName>
        <fullName>N-recognin</fullName>
    </alternativeName>
    <alternativeName>
        <fullName>RING-type E3 ubiquitin transferase UBR1</fullName>
    </alternativeName>
    <alternativeName>
        <fullName>Ubiquitin-protein ligase E3-alpha</fullName>
    </alternativeName>
</protein>
<accession>Q9VX91</accession>
<accession>B5RIU9</accession>
<accession>Q8SX71</accession>